<evidence type="ECO:0000255" key="1"/>
<evidence type="ECO:0000303" key="2">
    <source>
    </source>
</evidence>
<evidence type="ECO:0000305" key="3"/>
<evidence type="ECO:0000305" key="4">
    <source>
    </source>
</evidence>
<proteinExistence type="inferred from homology"/>
<feature type="chain" id="PRO_0000087963" description="Type II methyltransferase M.HinfI">
    <location>
        <begin position="1"/>
        <end position="359"/>
    </location>
</feature>
<feature type="domain" description="RAMA" evidence="1">
    <location>
        <begin position="275"/>
        <end position="358"/>
    </location>
</feature>
<organism>
    <name type="scientific">Haemophilus influenzae</name>
    <dbReference type="NCBI Taxonomy" id="727"/>
    <lineage>
        <taxon>Bacteria</taxon>
        <taxon>Pseudomonadati</taxon>
        <taxon>Pseudomonadota</taxon>
        <taxon>Gammaproteobacteria</taxon>
        <taxon>Pasteurellales</taxon>
        <taxon>Pasteurellaceae</taxon>
        <taxon>Haemophilus</taxon>
    </lineage>
</organism>
<reference key="1">
    <citation type="journal article" date="1988" name="Gene">
        <title>Cloning and sequencing the HinfI restriction and modification genes.</title>
        <authorList>
            <person name="Chandrasegaran S."/>
            <person name="Lunnen K.D."/>
            <person name="Smith H.O."/>
            <person name="Wilson G.G."/>
        </authorList>
    </citation>
    <scope>NUCLEOTIDE SEQUENCE [GENOMIC DNA]</scope>
    <scope>FUNCTION</scope>
    <source>
        <strain>RF</strain>
    </source>
</reference>
<reference key="2">
    <citation type="journal article" date="2003" name="Nucleic Acids Res.">
        <title>A nomenclature for restriction enzymes, DNA methyltransferases, homing endonucleases and their genes.</title>
        <authorList>
            <person name="Roberts R.J."/>
            <person name="Belfort M."/>
            <person name="Bestor T."/>
            <person name="Bhagwat A.S."/>
            <person name="Bickle T.A."/>
            <person name="Bitinaite J."/>
            <person name="Blumenthal R.M."/>
            <person name="Degtyarev S.K."/>
            <person name="Dryden D.T."/>
            <person name="Dybvig K."/>
            <person name="Firman K."/>
            <person name="Gromova E.S."/>
            <person name="Gumport R.I."/>
            <person name="Halford S.E."/>
            <person name="Hattman S."/>
            <person name="Heitman J."/>
            <person name="Hornby D.P."/>
            <person name="Janulaitis A."/>
            <person name="Jeltsch A."/>
            <person name="Josephsen J."/>
            <person name="Kiss A."/>
            <person name="Klaenhammer T.R."/>
            <person name="Kobayashi I."/>
            <person name="Kong H."/>
            <person name="Krueger D.H."/>
            <person name="Lacks S."/>
            <person name="Marinus M.G."/>
            <person name="Miyahara M."/>
            <person name="Morgan R.D."/>
            <person name="Murray N.E."/>
            <person name="Nagaraja V."/>
            <person name="Piekarowicz A."/>
            <person name="Pingoud A."/>
            <person name="Raleigh E."/>
            <person name="Rao D.N."/>
            <person name="Reich N."/>
            <person name="Repin V.E."/>
            <person name="Selker E.U."/>
            <person name="Shaw P.C."/>
            <person name="Stein D.C."/>
            <person name="Stoddard B.L."/>
            <person name="Szybalski W."/>
            <person name="Trautner T.A."/>
            <person name="Van Etten J.L."/>
            <person name="Vitor J.M."/>
            <person name="Wilson G.G."/>
            <person name="Xu S.Y."/>
        </authorList>
    </citation>
    <scope>NOMENCLATURE</scope>
    <scope>SUBTYPE</scope>
</reference>
<dbReference type="EC" id="2.1.1.72"/>
<dbReference type="EMBL" id="M22862">
    <property type="protein sequence ID" value="AAA24986.1"/>
    <property type="molecule type" value="Genomic_DNA"/>
</dbReference>
<dbReference type="PIR" id="JT0391">
    <property type="entry name" value="JT0391"/>
</dbReference>
<dbReference type="SMR" id="P20590"/>
<dbReference type="REBASE" id="3429">
    <property type="entry name" value="M.HinfI"/>
</dbReference>
<dbReference type="PRO" id="PR:P20590"/>
<dbReference type="GO" id="GO:0005737">
    <property type="term" value="C:cytoplasm"/>
    <property type="evidence" value="ECO:0007669"/>
    <property type="project" value="TreeGrafter"/>
</dbReference>
<dbReference type="GO" id="GO:0003677">
    <property type="term" value="F:DNA binding"/>
    <property type="evidence" value="ECO:0007669"/>
    <property type="project" value="UniProtKB-KW"/>
</dbReference>
<dbReference type="GO" id="GO:0008170">
    <property type="term" value="F:N-methyltransferase activity"/>
    <property type="evidence" value="ECO:0007669"/>
    <property type="project" value="InterPro"/>
</dbReference>
<dbReference type="GO" id="GO:0009007">
    <property type="term" value="F:site-specific DNA-methyltransferase (adenine-specific) activity"/>
    <property type="evidence" value="ECO:0007669"/>
    <property type="project" value="UniProtKB-EC"/>
</dbReference>
<dbReference type="GO" id="GO:0009307">
    <property type="term" value="P:DNA restriction-modification system"/>
    <property type="evidence" value="ECO:0007669"/>
    <property type="project" value="UniProtKB-KW"/>
</dbReference>
<dbReference type="GO" id="GO:0032259">
    <property type="term" value="P:methylation"/>
    <property type="evidence" value="ECO:0007669"/>
    <property type="project" value="UniProtKB-KW"/>
</dbReference>
<dbReference type="FunFam" id="3.40.50.150:FF:000276">
    <property type="entry name" value="Methyltransferase"/>
    <property type="match status" value="1"/>
</dbReference>
<dbReference type="Gene3D" id="3.40.50.150">
    <property type="entry name" value="Vaccinia Virus protein VP39"/>
    <property type="match status" value="1"/>
</dbReference>
<dbReference type="InterPro" id="IPR002941">
    <property type="entry name" value="DNA_methylase_N4/N6"/>
</dbReference>
<dbReference type="InterPro" id="IPR002052">
    <property type="entry name" value="DNA_methylase_N6_adenine_CS"/>
</dbReference>
<dbReference type="InterPro" id="IPR001091">
    <property type="entry name" value="RM_Methyltransferase"/>
</dbReference>
<dbReference type="InterPro" id="IPR029063">
    <property type="entry name" value="SAM-dependent_MTases_sf"/>
</dbReference>
<dbReference type="PANTHER" id="PTHR13370">
    <property type="entry name" value="RNA METHYLASE-RELATED"/>
    <property type="match status" value="1"/>
</dbReference>
<dbReference type="PANTHER" id="PTHR13370:SF3">
    <property type="entry name" value="TRNA (GUANINE(10)-N2)-METHYLTRANSFERASE HOMOLOG"/>
    <property type="match status" value="1"/>
</dbReference>
<dbReference type="Pfam" id="PF01555">
    <property type="entry name" value="N6_N4_Mtase"/>
    <property type="match status" value="1"/>
</dbReference>
<dbReference type="PRINTS" id="PR00508">
    <property type="entry name" value="S21N4MTFRASE"/>
</dbReference>
<dbReference type="SUPFAM" id="SSF53335">
    <property type="entry name" value="S-adenosyl-L-methionine-dependent methyltransferases"/>
    <property type="match status" value="1"/>
</dbReference>
<dbReference type="PROSITE" id="PS00092">
    <property type="entry name" value="N6_MTASE"/>
    <property type="match status" value="1"/>
</dbReference>
<comment type="function">
    <text evidence="2 4">A beta subtype methylase that recognizes the double-stranded sequence 5'-GANTC-3', methylates A-2 on both strands, and protects the DNA from cleavage by the HinfI endonuclease.</text>
</comment>
<comment type="catalytic activity">
    <reaction>
        <text>a 2'-deoxyadenosine in DNA + S-adenosyl-L-methionine = an N(6)-methyl-2'-deoxyadenosine in DNA + S-adenosyl-L-homocysteine + H(+)</text>
        <dbReference type="Rhea" id="RHEA:15197"/>
        <dbReference type="Rhea" id="RHEA-COMP:12418"/>
        <dbReference type="Rhea" id="RHEA-COMP:12419"/>
        <dbReference type="ChEBI" id="CHEBI:15378"/>
        <dbReference type="ChEBI" id="CHEBI:57856"/>
        <dbReference type="ChEBI" id="CHEBI:59789"/>
        <dbReference type="ChEBI" id="CHEBI:90615"/>
        <dbReference type="ChEBI" id="CHEBI:90616"/>
        <dbReference type="EC" id="2.1.1.72"/>
    </reaction>
</comment>
<comment type="similarity">
    <text evidence="3">Belongs to the N(4)/N(6)-methyltransferase family.</text>
</comment>
<sequence>MMKENINDFLNTILKGDCIEKLKTIPNESIDLIFADPPYFMQTEGKLLRTNGDEFSGVDDEWDKFNDFVEYDSFCELWLKECKRILKSTGSIWVIGSFQNIYRIGYIMQNLDFWILNDVIWNKTNPVPNFGGTRFCNAHETMLWCSKCKKNKFTFNYKTMKHLNQEKQERSVWSLSLCTGKERIKDEEGKKAHSTQKPESLLYKVILSSSKPNDVVLDPFFGTGTTGAVAKALGRNYIGIEREQKYIDVAEKRLREIKPNPNDIELLSLEIKPPKVPMKTLIEADFLRVGQTLFDKNENAICIVTQDGNVKDNEETLSIHKMSAKYLNKTNNNGWDYFYLFRNNNFITLDSLRYEYTNQ</sequence>
<keyword id="KW-0238">DNA-binding</keyword>
<keyword id="KW-0489">Methyltransferase</keyword>
<keyword id="KW-0680">Restriction system</keyword>
<keyword id="KW-0949">S-adenosyl-L-methionine</keyword>
<keyword id="KW-0808">Transferase</keyword>
<protein>
    <recommendedName>
        <fullName evidence="2">Type II methyltransferase M.HinfI</fullName>
        <shortName evidence="2">M.HinfI</shortName>
        <ecNumber>2.1.1.72</ecNumber>
    </recommendedName>
    <alternativeName>
        <fullName>Adenine-specific methyltransferase HinfI</fullName>
    </alternativeName>
    <alternativeName>
        <fullName>Modification methylase HinfI</fullName>
    </alternativeName>
</protein>
<gene>
    <name type="primary">hinfIM</name>
</gene>
<accession>P20590</accession>
<name>MTH1_HAEIF</name>